<name>NIFH2_METIV</name>
<organism>
    <name type="scientific">Methanobacterium ivanovii</name>
    <dbReference type="NCBI Taxonomy" id="2163"/>
    <lineage>
        <taxon>Archaea</taxon>
        <taxon>Methanobacteriati</taxon>
        <taxon>Methanobacteriota</taxon>
        <taxon>Methanomada group</taxon>
        <taxon>Methanobacteria</taxon>
        <taxon>Methanobacteriales</taxon>
        <taxon>Methanobacteriaceae</taxon>
        <taxon>Methanobacterium</taxon>
    </lineage>
</organism>
<comment type="function">
    <text evidence="1">The key enzymatic reactions in nitrogen fixation are catalyzed by the nitrogenase complex, which has 2 components: the iron protein and the molybdenum-iron protein.</text>
</comment>
<comment type="catalytic activity">
    <reaction>
        <text>N2 + 8 reduced [2Fe-2S]-[ferredoxin] + 16 ATP + 16 H2O = H2 + 8 oxidized [2Fe-2S]-[ferredoxin] + 2 NH4(+) + 16 ADP + 16 phosphate + 6 H(+)</text>
        <dbReference type="Rhea" id="RHEA:21448"/>
        <dbReference type="Rhea" id="RHEA-COMP:10000"/>
        <dbReference type="Rhea" id="RHEA-COMP:10001"/>
        <dbReference type="ChEBI" id="CHEBI:15377"/>
        <dbReference type="ChEBI" id="CHEBI:15378"/>
        <dbReference type="ChEBI" id="CHEBI:17997"/>
        <dbReference type="ChEBI" id="CHEBI:18276"/>
        <dbReference type="ChEBI" id="CHEBI:28938"/>
        <dbReference type="ChEBI" id="CHEBI:30616"/>
        <dbReference type="ChEBI" id="CHEBI:33737"/>
        <dbReference type="ChEBI" id="CHEBI:33738"/>
        <dbReference type="ChEBI" id="CHEBI:43474"/>
        <dbReference type="ChEBI" id="CHEBI:456216"/>
        <dbReference type="EC" id="1.18.6.1"/>
    </reaction>
</comment>
<comment type="cofactor">
    <cofactor evidence="1">
        <name>[4Fe-4S] cluster</name>
        <dbReference type="ChEBI" id="CHEBI:49883"/>
    </cofactor>
    <text evidence="1">Binds 1 [4Fe-4S] cluster per dimer.</text>
</comment>
<comment type="subunit">
    <text evidence="1">Homodimer.</text>
</comment>
<comment type="PTM">
    <text evidence="1">The reversible ADP-ribosylation of Arg-95 inactivates the nitrogenase reductase and regulates nitrogenase activity.</text>
</comment>
<comment type="similarity">
    <text evidence="3">Belongs to the NifH/BchL/ChlL family.</text>
</comment>
<reference key="1">
    <citation type="journal article" date="1988" name="J. Mol. Evol.">
        <title>Nucleotide sequence of regions homologous to nifH (nitrogenase Fe protein) from the nitrogen-fixing archaebacteria Methanococcus thermolithotrophicus and Methanobacterium ivanovii: evolutionary implications.</title>
        <authorList>
            <person name="Souillard N."/>
            <person name="Magot M."/>
            <person name="Possot O."/>
            <person name="Sibold L."/>
        </authorList>
    </citation>
    <scope>NUCLEOTIDE SEQUENCE [GENOMIC DNA]</scope>
</reference>
<accession>P08624</accession>
<dbReference type="EC" id="1.18.6.1"/>
<dbReference type="EMBL" id="X07501">
    <property type="protein sequence ID" value="CAA30384.1"/>
    <property type="molecule type" value="Genomic_DNA"/>
</dbReference>
<dbReference type="PIR" id="S00741">
    <property type="entry name" value="S00741"/>
</dbReference>
<dbReference type="SMR" id="P08624"/>
<dbReference type="GO" id="GO:0051539">
    <property type="term" value="F:4 iron, 4 sulfur cluster binding"/>
    <property type="evidence" value="ECO:0007669"/>
    <property type="project" value="UniProtKB-KW"/>
</dbReference>
<dbReference type="GO" id="GO:0005524">
    <property type="term" value="F:ATP binding"/>
    <property type="evidence" value="ECO:0007669"/>
    <property type="project" value="UniProtKB-UniRule"/>
</dbReference>
<dbReference type="GO" id="GO:0046872">
    <property type="term" value="F:metal ion binding"/>
    <property type="evidence" value="ECO:0007669"/>
    <property type="project" value="UniProtKB-KW"/>
</dbReference>
<dbReference type="GO" id="GO:0016163">
    <property type="term" value="F:nitrogenase activity"/>
    <property type="evidence" value="ECO:0007669"/>
    <property type="project" value="UniProtKB-UniRule"/>
</dbReference>
<dbReference type="GO" id="GO:0009399">
    <property type="term" value="P:nitrogen fixation"/>
    <property type="evidence" value="ECO:0007669"/>
    <property type="project" value="UniProtKB-UniRule"/>
</dbReference>
<dbReference type="CDD" id="cd02040">
    <property type="entry name" value="NifH"/>
    <property type="match status" value="1"/>
</dbReference>
<dbReference type="Gene3D" id="3.40.50.300">
    <property type="entry name" value="P-loop containing nucleotide triphosphate hydrolases"/>
    <property type="match status" value="1"/>
</dbReference>
<dbReference type="HAMAP" id="MF_00533">
    <property type="entry name" value="NifH"/>
    <property type="match status" value="1"/>
</dbReference>
<dbReference type="InterPro" id="IPR030655">
    <property type="entry name" value="NifH/chlL_CS"/>
</dbReference>
<dbReference type="InterPro" id="IPR000392">
    <property type="entry name" value="NifH/frxC"/>
</dbReference>
<dbReference type="InterPro" id="IPR005977">
    <property type="entry name" value="Nitrogenase_Fe_NifH"/>
</dbReference>
<dbReference type="InterPro" id="IPR027417">
    <property type="entry name" value="P-loop_NTPase"/>
</dbReference>
<dbReference type="NCBIfam" id="NF033200">
    <property type="entry name" value="F430_CfbC"/>
    <property type="match status" value="1"/>
</dbReference>
<dbReference type="NCBIfam" id="NF009702">
    <property type="entry name" value="PRK13231.1"/>
    <property type="match status" value="1"/>
</dbReference>
<dbReference type="PANTHER" id="PTHR42864">
    <property type="entry name" value="LIGHT-INDEPENDENT PROTOCHLOROPHYLLIDE REDUCTASE IRON-SULFUR ATP-BINDING PROTEIN"/>
    <property type="match status" value="1"/>
</dbReference>
<dbReference type="PANTHER" id="PTHR42864:SF2">
    <property type="entry name" value="LIGHT-INDEPENDENT PROTOCHLOROPHYLLIDE REDUCTASE IRON-SULFUR ATP-BINDING PROTEIN"/>
    <property type="match status" value="1"/>
</dbReference>
<dbReference type="Pfam" id="PF00142">
    <property type="entry name" value="Fer4_NifH"/>
    <property type="match status" value="1"/>
</dbReference>
<dbReference type="PIRSF" id="PIRSF000363">
    <property type="entry name" value="Nitrogenase_iron"/>
    <property type="match status" value="1"/>
</dbReference>
<dbReference type="PRINTS" id="PR00091">
    <property type="entry name" value="NITROGNASEII"/>
</dbReference>
<dbReference type="SUPFAM" id="SSF52540">
    <property type="entry name" value="P-loop containing nucleoside triphosphate hydrolases"/>
    <property type="match status" value="1"/>
</dbReference>
<dbReference type="PROSITE" id="PS00746">
    <property type="entry name" value="NIFH_FRXC_1"/>
    <property type="match status" value="1"/>
</dbReference>
<dbReference type="PROSITE" id="PS00692">
    <property type="entry name" value="NIFH_FRXC_2"/>
    <property type="match status" value="1"/>
</dbReference>
<dbReference type="PROSITE" id="PS51026">
    <property type="entry name" value="NIFH_FRXC_3"/>
    <property type="match status" value="1"/>
</dbReference>
<proteinExistence type="inferred from homology"/>
<evidence type="ECO:0000250" key="1"/>
<evidence type="ECO:0000255" key="2"/>
<evidence type="ECO:0000305" key="3"/>
<feature type="chain" id="PRO_0000139538" description="Nitrogenase iron protein 2">
    <location>
        <begin position="1"/>
        <end position="263"/>
    </location>
</feature>
<feature type="binding site" evidence="2">
    <location>
        <begin position="9"/>
        <end position="16"/>
    </location>
    <ligand>
        <name>ATP</name>
        <dbReference type="ChEBI" id="CHEBI:30616"/>
    </ligand>
</feature>
<feature type="binding site" evidence="1">
    <location>
        <position position="92"/>
    </location>
    <ligand>
        <name>[4Fe-4S] cluster</name>
        <dbReference type="ChEBI" id="CHEBI:49883"/>
        <note>ligand shared between dimeric partners</note>
    </ligand>
</feature>
<feature type="binding site" evidence="1">
    <location>
        <position position="127"/>
    </location>
    <ligand>
        <name>[4Fe-4S] cluster</name>
        <dbReference type="ChEBI" id="CHEBI:49883"/>
        <note>ligand shared between dimeric partners</note>
    </ligand>
</feature>
<feature type="modified residue" description="ADP-ribosylarginine; by dinitrogenase reductase ADP-ribosyltransferase" evidence="1">
    <location>
        <position position="95"/>
    </location>
</feature>
<sequence length="263" mass="28380">MSKRIAIYGKGGIGKSTIVSNIAAAYSKDYNVLVIGCDPKADTTRTLIGKRLPTILDIVKKKKNASIEEVLFEGYGNVKCVESGGPEPGVGCAGRGVIVAMGLLDKLGTFSDDIDIIIYDVLGDVVCGGFAVPLREDFADEVYIVTSGEYMALYAANNICRGIKKLKSNLGGIICNCRGIENEVQIVSEFAGKVGSKVIGIIPGSEMVQKSEIDAKTVIEKFGESEQADLYRELAKSIYSNEDFVIPEPMGVDEFDEFFRGFQ</sequence>
<keyword id="KW-0004">4Fe-4S</keyword>
<keyword id="KW-0013">ADP-ribosylation</keyword>
<keyword id="KW-0067">ATP-binding</keyword>
<keyword id="KW-0408">Iron</keyword>
<keyword id="KW-0411">Iron-sulfur</keyword>
<keyword id="KW-0479">Metal-binding</keyword>
<keyword id="KW-0535">Nitrogen fixation</keyword>
<keyword id="KW-0547">Nucleotide-binding</keyword>
<keyword id="KW-0560">Oxidoreductase</keyword>
<protein>
    <recommendedName>
        <fullName>Nitrogenase iron protein 2</fullName>
        <ecNumber>1.18.6.1</ecNumber>
    </recommendedName>
    <alternativeName>
        <fullName>Nitrogenase Fe protein 2</fullName>
    </alternativeName>
    <alternativeName>
        <fullName>Nitrogenase component II</fullName>
    </alternativeName>
    <alternativeName>
        <fullName>Nitrogenase reductase</fullName>
    </alternativeName>
</protein>
<gene>
    <name type="primary">nifH2</name>
</gene>